<organism>
    <name type="scientific">Streptococcus pyogenes serotype M49 (strain NZ131)</name>
    <dbReference type="NCBI Taxonomy" id="471876"/>
    <lineage>
        <taxon>Bacteria</taxon>
        <taxon>Bacillati</taxon>
        <taxon>Bacillota</taxon>
        <taxon>Bacilli</taxon>
        <taxon>Lactobacillales</taxon>
        <taxon>Streptococcaceae</taxon>
        <taxon>Streptococcus</taxon>
    </lineage>
</organism>
<reference key="1">
    <citation type="journal article" date="2008" name="J. Bacteriol.">
        <title>Genome sequence of a nephritogenic and highly transformable M49 strain of Streptococcus pyogenes.</title>
        <authorList>
            <person name="McShan W.M."/>
            <person name="Ferretti J.J."/>
            <person name="Karasawa T."/>
            <person name="Suvorov A.N."/>
            <person name="Lin S."/>
            <person name="Qin B."/>
            <person name="Jia H."/>
            <person name="Kenton S."/>
            <person name="Najar F."/>
            <person name="Wu H."/>
            <person name="Scott J."/>
            <person name="Roe B.A."/>
            <person name="Savic D.J."/>
        </authorList>
    </citation>
    <scope>NUCLEOTIDE SEQUENCE [LARGE SCALE GENOMIC DNA]</scope>
    <source>
        <strain>NZ131</strain>
    </source>
</reference>
<dbReference type="EC" id="1.5.1.5" evidence="1"/>
<dbReference type="EC" id="3.5.4.9" evidence="1"/>
<dbReference type="EMBL" id="CP000829">
    <property type="protein sequence ID" value="ACI61446.1"/>
    <property type="molecule type" value="Genomic_DNA"/>
</dbReference>
<dbReference type="SMR" id="B5XM84"/>
<dbReference type="KEGG" id="soz:Spy49_1158c"/>
<dbReference type="HOGENOM" id="CLU_034045_2_1_9"/>
<dbReference type="UniPathway" id="UPA00193"/>
<dbReference type="Proteomes" id="UP000001039">
    <property type="component" value="Chromosome"/>
</dbReference>
<dbReference type="GO" id="GO:0005829">
    <property type="term" value="C:cytosol"/>
    <property type="evidence" value="ECO:0007669"/>
    <property type="project" value="TreeGrafter"/>
</dbReference>
<dbReference type="GO" id="GO:0004477">
    <property type="term" value="F:methenyltetrahydrofolate cyclohydrolase activity"/>
    <property type="evidence" value="ECO:0007669"/>
    <property type="project" value="UniProtKB-UniRule"/>
</dbReference>
<dbReference type="GO" id="GO:0004488">
    <property type="term" value="F:methylenetetrahydrofolate dehydrogenase (NADP+) activity"/>
    <property type="evidence" value="ECO:0007669"/>
    <property type="project" value="UniProtKB-UniRule"/>
</dbReference>
<dbReference type="GO" id="GO:0000105">
    <property type="term" value="P:L-histidine biosynthetic process"/>
    <property type="evidence" value="ECO:0007669"/>
    <property type="project" value="UniProtKB-KW"/>
</dbReference>
<dbReference type="GO" id="GO:0009086">
    <property type="term" value="P:methionine biosynthetic process"/>
    <property type="evidence" value="ECO:0007669"/>
    <property type="project" value="UniProtKB-KW"/>
</dbReference>
<dbReference type="GO" id="GO:0006164">
    <property type="term" value="P:purine nucleotide biosynthetic process"/>
    <property type="evidence" value="ECO:0007669"/>
    <property type="project" value="UniProtKB-KW"/>
</dbReference>
<dbReference type="GO" id="GO:0035999">
    <property type="term" value="P:tetrahydrofolate interconversion"/>
    <property type="evidence" value="ECO:0007669"/>
    <property type="project" value="UniProtKB-UniRule"/>
</dbReference>
<dbReference type="CDD" id="cd01080">
    <property type="entry name" value="NAD_bind_m-THF_DH_Cyclohyd"/>
    <property type="match status" value="1"/>
</dbReference>
<dbReference type="FunFam" id="3.40.50.10860:FF:000001">
    <property type="entry name" value="Bifunctional protein FolD"/>
    <property type="match status" value="1"/>
</dbReference>
<dbReference type="FunFam" id="3.40.50.720:FF:000094">
    <property type="entry name" value="Bifunctional protein FolD"/>
    <property type="match status" value="1"/>
</dbReference>
<dbReference type="Gene3D" id="3.40.50.10860">
    <property type="entry name" value="Leucine Dehydrogenase, chain A, domain 1"/>
    <property type="match status" value="1"/>
</dbReference>
<dbReference type="Gene3D" id="3.40.50.720">
    <property type="entry name" value="NAD(P)-binding Rossmann-like Domain"/>
    <property type="match status" value="1"/>
</dbReference>
<dbReference type="HAMAP" id="MF_01576">
    <property type="entry name" value="THF_DHG_CYH"/>
    <property type="match status" value="1"/>
</dbReference>
<dbReference type="InterPro" id="IPR046346">
    <property type="entry name" value="Aminoacid_DH-like_N_sf"/>
</dbReference>
<dbReference type="InterPro" id="IPR036291">
    <property type="entry name" value="NAD(P)-bd_dom_sf"/>
</dbReference>
<dbReference type="InterPro" id="IPR000672">
    <property type="entry name" value="THF_DH/CycHdrlase"/>
</dbReference>
<dbReference type="InterPro" id="IPR020630">
    <property type="entry name" value="THF_DH/CycHdrlase_cat_dom"/>
</dbReference>
<dbReference type="InterPro" id="IPR020867">
    <property type="entry name" value="THF_DH/CycHdrlase_CS"/>
</dbReference>
<dbReference type="InterPro" id="IPR020631">
    <property type="entry name" value="THF_DH/CycHdrlase_NAD-bd_dom"/>
</dbReference>
<dbReference type="NCBIfam" id="NF008058">
    <property type="entry name" value="PRK10792.1"/>
    <property type="match status" value="1"/>
</dbReference>
<dbReference type="NCBIfam" id="NF010776">
    <property type="entry name" value="PRK14179.1"/>
    <property type="match status" value="1"/>
</dbReference>
<dbReference type="NCBIfam" id="NF010783">
    <property type="entry name" value="PRK14186.1"/>
    <property type="match status" value="1"/>
</dbReference>
<dbReference type="NCBIfam" id="NF010785">
    <property type="entry name" value="PRK14188.1"/>
    <property type="match status" value="1"/>
</dbReference>
<dbReference type="PANTHER" id="PTHR48099:SF5">
    <property type="entry name" value="C-1-TETRAHYDROFOLATE SYNTHASE, CYTOPLASMIC"/>
    <property type="match status" value="1"/>
</dbReference>
<dbReference type="PANTHER" id="PTHR48099">
    <property type="entry name" value="C-1-TETRAHYDROFOLATE SYNTHASE, CYTOPLASMIC-RELATED"/>
    <property type="match status" value="1"/>
</dbReference>
<dbReference type="Pfam" id="PF00763">
    <property type="entry name" value="THF_DHG_CYH"/>
    <property type="match status" value="1"/>
</dbReference>
<dbReference type="Pfam" id="PF02882">
    <property type="entry name" value="THF_DHG_CYH_C"/>
    <property type="match status" value="1"/>
</dbReference>
<dbReference type="PRINTS" id="PR00085">
    <property type="entry name" value="THFDHDRGNASE"/>
</dbReference>
<dbReference type="SUPFAM" id="SSF53223">
    <property type="entry name" value="Aminoacid dehydrogenase-like, N-terminal domain"/>
    <property type="match status" value="1"/>
</dbReference>
<dbReference type="SUPFAM" id="SSF51735">
    <property type="entry name" value="NAD(P)-binding Rossmann-fold domains"/>
    <property type="match status" value="1"/>
</dbReference>
<dbReference type="PROSITE" id="PS00766">
    <property type="entry name" value="THF_DHG_CYH_1"/>
    <property type="match status" value="1"/>
</dbReference>
<dbReference type="PROSITE" id="PS00767">
    <property type="entry name" value="THF_DHG_CYH_2"/>
    <property type="match status" value="1"/>
</dbReference>
<evidence type="ECO:0000255" key="1">
    <source>
        <dbReference type="HAMAP-Rule" id="MF_01576"/>
    </source>
</evidence>
<feature type="chain" id="PRO_1000196807" description="Bifunctional protein FolD">
    <location>
        <begin position="1"/>
        <end position="284"/>
    </location>
</feature>
<feature type="binding site" evidence="1">
    <location>
        <begin position="165"/>
        <end position="167"/>
    </location>
    <ligand>
        <name>NADP(+)</name>
        <dbReference type="ChEBI" id="CHEBI:58349"/>
    </ligand>
</feature>
<feature type="binding site" evidence="1">
    <location>
        <position position="190"/>
    </location>
    <ligand>
        <name>NADP(+)</name>
        <dbReference type="ChEBI" id="CHEBI:58349"/>
    </ligand>
</feature>
<name>FOLD_STRPZ</name>
<protein>
    <recommendedName>
        <fullName evidence="1">Bifunctional protein FolD</fullName>
    </recommendedName>
    <domain>
        <recommendedName>
            <fullName evidence="1">Methylenetetrahydrofolate dehydrogenase</fullName>
            <ecNumber evidence="1">1.5.1.5</ecNumber>
        </recommendedName>
    </domain>
    <domain>
        <recommendedName>
            <fullName evidence="1">Methenyltetrahydrofolate cyclohydrolase</fullName>
            <ecNumber evidence="1">3.5.4.9</ecNumber>
        </recommendedName>
    </domain>
</protein>
<keyword id="KW-0028">Amino-acid biosynthesis</keyword>
<keyword id="KW-0368">Histidine biosynthesis</keyword>
<keyword id="KW-0378">Hydrolase</keyword>
<keyword id="KW-0486">Methionine biosynthesis</keyword>
<keyword id="KW-0511">Multifunctional enzyme</keyword>
<keyword id="KW-0521">NADP</keyword>
<keyword id="KW-0554">One-carbon metabolism</keyword>
<keyword id="KW-0560">Oxidoreductase</keyword>
<keyword id="KW-0658">Purine biosynthesis</keyword>
<gene>
    <name evidence="1" type="primary">folD</name>
    <name type="ordered locus">Spy49_1158c</name>
</gene>
<comment type="function">
    <text evidence="1">Catalyzes the oxidation of 5,10-methylenetetrahydrofolate to 5,10-methenyltetrahydrofolate and then the hydrolysis of 5,10-methenyltetrahydrofolate to 10-formyltetrahydrofolate.</text>
</comment>
<comment type="catalytic activity">
    <reaction evidence="1">
        <text>(6R)-5,10-methylene-5,6,7,8-tetrahydrofolate + NADP(+) = (6R)-5,10-methenyltetrahydrofolate + NADPH</text>
        <dbReference type="Rhea" id="RHEA:22812"/>
        <dbReference type="ChEBI" id="CHEBI:15636"/>
        <dbReference type="ChEBI" id="CHEBI:57455"/>
        <dbReference type="ChEBI" id="CHEBI:57783"/>
        <dbReference type="ChEBI" id="CHEBI:58349"/>
        <dbReference type="EC" id="1.5.1.5"/>
    </reaction>
</comment>
<comment type="catalytic activity">
    <reaction evidence="1">
        <text>(6R)-5,10-methenyltetrahydrofolate + H2O = (6R)-10-formyltetrahydrofolate + H(+)</text>
        <dbReference type="Rhea" id="RHEA:23700"/>
        <dbReference type="ChEBI" id="CHEBI:15377"/>
        <dbReference type="ChEBI" id="CHEBI:15378"/>
        <dbReference type="ChEBI" id="CHEBI:57455"/>
        <dbReference type="ChEBI" id="CHEBI:195366"/>
        <dbReference type="EC" id="3.5.4.9"/>
    </reaction>
</comment>
<comment type="pathway">
    <text evidence="1">One-carbon metabolism; tetrahydrofolate interconversion.</text>
</comment>
<comment type="subunit">
    <text evidence="1">Homodimer.</text>
</comment>
<comment type="similarity">
    <text evidence="1">Belongs to the tetrahydrofolate dehydrogenase/cyclohydrolase family.</text>
</comment>
<proteinExistence type="inferred from homology"/>
<sequence>MTELIDGKALAQKMQQELAAKVNNLKQKKGIVPGLAVILVGDDPASQVYVRNKERAALTVGFKSETVRLSEFICQEELIAVIERYNADNTIHGILVQLPLPNHINDKKIILAIDPKKDVDGFHPMNTGHLWSGRPLMVPCTPSGIMELLREYNVNLEGKHAVIIGRSNIVGKPMAQLLLDKNATVTLTHSRTRQLEEVCRCADVLIVAIGQGHFITKQYIKEGAIVIDVGMNRDDNGKLIGDVAFDEVAEVAAKITPVPGGVGPMTIAMLLEQTYQSALRSTHK</sequence>
<accession>B5XM84</accession>